<evidence type="ECO:0000250" key="1">
    <source>
        <dbReference type="UniProtKB" id="P45548"/>
    </source>
</evidence>
<evidence type="ECO:0000255" key="2">
    <source>
        <dbReference type="PROSITE-ProRule" id="PRU00679"/>
    </source>
</evidence>
<reference key="1">
    <citation type="journal article" date="2007" name="Nature">
        <title>Evolution of genes and genomes on the Drosophila phylogeny.</title>
        <authorList>
            <consortium name="Drosophila 12 genomes consortium"/>
        </authorList>
    </citation>
    <scope>NUCLEOTIDE SEQUENCE [LARGE SCALE GENOMIC DNA]</scope>
    <source>
        <strain>Rob3c / Tucson 14021-0248.25</strain>
    </source>
</reference>
<comment type="cofactor">
    <cofactor evidence="1">
        <name>a divalent metal cation</name>
        <dbReference type="ChEBI" id="CHEBI:60240"/>
    </cofactor>
    <text evidence="1">Binds 2 divalent metal cations per subunit.</text>
</comment>
<comment type="similarity">
    <text evidence="2">Belongs to the metallo-dependent hydrolases superfamily. Phosphotriesterase family.</text>
</comment>
<organism>
    <name type="scientific">Drosophila sechellia</name>
    <name type="common">Fruit fly</name>
    <dbReference type="NCBI Taxonomy" id="7238"/>
    <lineage>
        <taxon>Eukaryota</taxon>
        <taxon>Metazoa</taxon>
        <taxon>Ecdysozoa</taxon>
        <taxon>Arthropoda</taxon>
        <taxon>Hexapoda</taxon>
        <taxon>Insecta</taxon>
        <taxon>Pterygota</taxon>
        <taxon>Neoptera</taxon>
        <taxon>Endopterygota</taxon>
        <taxon>Diptera</taxon>
        <taxon>Brachycera</taxon>
        <taxon>Muscomorpha</taxon>
        <taxon>Ephydroidea</taxon>
        <taxon>Drosophilidae</taxon>
        <taxon>Drosophila</taxon>
        <taxon>Sophophora</taxon>
    </lineage>
</organism>
<feature type="chain" id="PRO_0000388679" description="Phosphotriesterase-related protein">
    <location>
        <begin position="1"/>
        <end position="350"/>
    </location>
</feature>
<feature type="binding site" evidence="1">
    <location>
        <position position="22"/>
    </location>
    <ligand>
        <name>a divalent metal cation</name>
        <dbReference type="ChEBI" id="CHEBI:60240"/>
        <label>1</label>
    </ligand>
</feature>
<feature type="binding site" evidence="1">
    <location>
        <position position="24"/>
    </location>
    <ligand>
        <name>a divalent metal cation</name>
        <dbReference type="ChEBI" id="CHEBI:60240"/>
        <label>1</label>
    </ligand>
</feature>
<feature type="binding site" evidence="1">
    <location>
        <position position="169"/>
    </location>
    <ligand>
        <name>a divalent metal cation</name>
        <dbReference type="ChEBI" id="CHEBI:60240"/>
        <label>1</label>
    </ligand>
</feature>
<feature type="binding site" evidence="1">
    <location>
        <position position="169"/>
    </location>
    <ligand>
        <name>a divalent metal cation</name>
        <dbReference type="ChEBI" id="CHEBI:60240"/>
        <label>2</label>
    </ligand>
</feature>
<feature type="binding site" evidence="1">
    <location>
        <position position="201"/>
    </location>
    <ligand>
        <name>a divalent metal cation</name>
        <dbReference type="ChEBI" id="CHEBI:60240"/>
        <label>2</label>
    </ligand>
</feature>
<feature type="binding site" evidence="1">
    <location>
        <position position="230"/>
    </location>
    <ligand>
        <name>a divalent metal cation</name>
        <dbReference type="ChEBI" id="CHEBI:60240"/>
        <label>2</label>
    </ligand>
</feature>
<feature type="binding site" evidence="1">
    <location>
        <position position="298"/>
    </location>
    <ligand>
        <name>a divalent metal cation</name>
        <dbReference type="ChEBI" id="CHEBI:60240"/>
        <label>1</label>
    </ligand>
</feature>
<accession>B4HKF2</accession>
<protein>
    <recommendedName>
        <fullName>Phosphotriesterase-related protein</fullName>
        <ecNumber>3.1.-.-</ecNumber>
    </recommendedName>
    <alternativeName>
        <fullName>Parathion hydrolase-related protein</fullName>
    </alternativeName>
</protein>
<keyword id="KW-0378">Hydrolase</keyword>
<keyword id="KW-0479">Metal-binding</keyword>
<keyword id="KW-1185">Reference proteome</keyword>
<gene>
    <name type="ORF">GM23797</name>
</gene>
<proteinExistence type="inferred from homology"/>
<sequence>MSTVQTVLGTITPNLLGRTLTHEHVALDFEHFYRPPPPDFESELKAKISMSTLGYVRLYPYSSKENVRFYDGEALEAAKKDVLLYKKHGGGSIVENSSYGLKRNLEFIVELAKSTGVHFIAGTGHYIHAMQDASHGSLTVEQMSDLYSKDIITGLQVNGKVVKCGFIGEVASVYPIHDFEKNAIKAAGEIQEVLGCGVSMHPHRVTKAPFEIMRLYLEAGGRADKCVMSHLDRTIFDIDELLEFAKLGCYIQYDLFGTECSFYQLNTSVDMISDGQRIDNLIKLIKEGLVDKLLMSHDIHTKHRLTSYGGHGYHHIHTNILPRMFDRGVTLEQVEQITVTNPANWLAFDP</sequence>
<name>PTER_DROSE</name>
<dbReference type="EC" id="3.1.-.-"/>
<dbReference type="EMBL" id="CH480815">
    <property type="protein sequence ID" value="EDW42902.1"/>
    <property type="molecule type" value="Genomic_DNA"/>
</dbReference>
<dbReference type="SMR" id="B4HKF2"/>
<dbReference type="STRING" id="7238.B4HKF2"/>
<dbReference type="EnsemblMetazoa" id="FBtr0206782">
    <property type="protein sequence ID" value="FBpp0205274"/>
    <property type="gene ID" value="FBgn0178662"/>
</dbReference>
<dbReference type="EnsemblMetazoa" id="XM_002031880.2">
    <property type="protein sequence ID" value="XP_002031916.1"/>
    <property type="gene ID" value="LOC6607128"/>
</dbReference>
<dbReference type="GeneID" id="6607128"/>
<dbReference type="KEGG" id="dse:6607128"/>
<dbReference type="HOGENOM" id="CLU_054760_0_1_1"/>
<dbReference type="OMA" id="MVKCGFI"/>
<dbReference type="OrthoDB" id="3248at7215"/>
<dbReference type="PhylomeDB" id="B4HKF2"/>
<dbReference type="Proteomes" id="UP000001292">
    <property type="component" value="Unassembled WGS sequence"/>
</dbReference>
<dbReference type="GO" id="GO:0016788">
    <property type="term" value="F:hydrolase activity, acting on ester bonds"/>
    <property type="evidence" value="ECO:0007669"/>
    <property type="project" value="InterPro"/>
</dbReference>
<dbReference type="GO" id="GO:0008270">
    <property type="term" value="F:zinc ion binding"/>
    <property type="evidence" value="ECO:0007669"/>
    <property type="project" value="InterPro"/>
</dbReference>
<dbReference type="GO" id="GO:0009056">
    <property type="term" value="P:catabolic process"/>
    <property type="evidence" value="ECO:0007669"/>
    <property type="project" value="InterPro"/>
</dbReference>
<dbReference type="CDD" id="cd00530">
    <property type="entry name" value="PTE"/>
    <property type="match status" value="1"/>
</dbReference>
<dbReference type="Gene3D" id="3.20.20.140">
    <property type="entry name" value="Metal-dependent hydrolases"/>
    <property type="match status" value="1"/>
</dbReference>
<dbReference type="InterPro" id="IPR017947">
    <property type="entry name" value="AryldialkylPase_Zn-BS"/>
</dbReference>
<dbReference type="InterPro" id="IPR032466">
    <property type="entry name" value="Metal_Hydrolase"/>
</dbReference>
<dbReference type="InterPro" id="IPR001559">
    <property type="entry name" value="Phosphotriesterase"/>
</dbReference>
<dbReference type="PANTHER" id="PTHR10819">
    <property type="entry name" value="PHOSPHOTRIESTERASE-RELATED"/>
    <property type="match status" value="1"/>
</dbReference>
<dbReference type="PANTHER" id="PTHR10819:SF3">
    <property type="entry name" value="PHOSPHOTRIESTERASE-RELATED PROTEIN"/>
    <property type="match status" value="1"/>
</dbReference>
<dbReference type="Pfam" id="PF02126">
    <property type="entry name" value="PTE"/>
    <property type="match status" value="1"/>
</dbReference>
<dbReference type="SUPFAM" id="SSF51556">
    <property type="entry name" value="Metallo-dependent hydrolases"/>
    <property type="match status" value="1"/>
</dbReference>
<dbReference type="PROSITE" id="PS01322">
    <property type="entry name" value="PHOSPHOTRIESTERASE_1"/>
    <property type="match status" value="1"/>
</dbReference>
<dbReference type="PROSITE" id="PS51347">
    <property type="entry name" value="PHOSPHOTRIESTERASE_2"/>
    <property type="match status" value="1"/>
</dbReference>